<feature type="chain" id="PRO_0000417707" description="CRISPR-associated endoribonuclease Cas2 3">
    <location>
        <begin position="1"/>
        <end position="93"/>
    </location>
</feature>
<feature type="binding site" evidence="1">
    <location>
        <position position="10"/>
    </location>
    <ligand>
        <name>Mg(2+)</name>
        <dbReference type="ChEBI" id="CHEBI:18420"/>
        <note>catalytic</note>
    </ligand>
</feature>
<keyword id="KW-0051">Antiviral defense</keyword>
<keyword id="KW-0255">Endonuclease</keyword>
<keyword id="KW-0378">Hydrolase</keyword>
<keyword id="KW-0460">Magnesium</keyword>
<keyword id="KW-0479">Metal-binding</keyword>
<keyword id="KW-0540">Nuclease</keyword>
<keyword id="KW-1185">Reference proteome</keyword>
<organism>
    <name type="scientific">Chloroflexus aurantiacus (strain ATCC 29366 / DSM 635 / J-10-fl)</name>
    <dbReference type="NCBI Taxonomy" id="324602"/>
    <lineage>
        <taxon>Bacteria</taxon>
        <taxon>Bacillati</taxon>
        <taxon>Chloroflexota</taxon>
        <taxon>Chloroflexia</taxon>
        <taxon>Chloroflexales</taxon>
        <taxon>Chloroflexineae</taxon>
        <taxon>Chloroflexaceae</taxon>
        <taxon>Chloroflexus</taxon>
    </lineage>
</organism>
<gene>
    <name evidence="1" type="primary">cas2-3</name>
    <name type="ordered locus">Caur_3386</name>
</gene>
<accession>A9WJV5</accession>
<name>CAS2C_CHLAA</name>
<dbReference type="EC" id="3.1.-.-" evidence="1"/>
<dbReference type="EMBL" id="CP000909">
    <property type="protein sequence ID" value="ABY36571.1"/>
    <property type="molecule type" value="Genomic_DNA"/>
</dbReference>
<dbReference type="RefSeq" id="YP_001636960.1">
    <property type="nucleotide sequence ID" value="NC_010175.1"/>
</dbReference>
<dbReference type="SMR" id="A9WJV5"/>
<dbReference type="STRING" id="324602.Caur_3386"/>
<dbReference type="EnsemblBacteria" id="ABY36571">
    <property type="protein sequence ID" value="ABY36571"/>
    <property type="gene ID" value="Caur_3386"/>
</dbReference>
<dbReference type="KEGG" id="cau:Caur_3386"/>
<dbReference type="PATRIC" id="fig|324602.8.peg.3810"/>
<dbReference type="eggNOG" id="COG1343">
    <property type="taxonomic scope" value="Bacteria"/>
</dbReference>
<dbReference type="HOGENOM" id="CLU_161124_3_3_0"/>
<dbReference type="InParanoid" id="A9WJV5"/>
<dbReference type="Proteomes" id="UP000002008">
    <property type="component" value="Chromosome"/>
</dbReference>
<dbReference type="GO" id="GO:0046872">
    <property type="term" value="F:metal ion binding"/>
    <property type="evidence" value="ECO:0007669"/>
    <property type="project" value="UniProtKB-UniRule"/>
</dbReference>
<dbReference type="GO" id="GO:0004521">
    <property type="term" value="F:RNA endonuclease activity"/>
    <property type="evidence" value="ECO:0007669"/>
    <property type="project" value="InterPro"/>
</dbReference>
<dbReference type="GO" id="GO:0051607">
    <property type="term" value="P:defense response to virus"/>
    <property type="evidence" value="ECO:0007669"/>
    <property type="project" value="UniProtKB-UniRule"/>
</dbReference>
<dbReference type="GO" id="GO:0043571">
    <property type="term" value="P:maintenance of CRISPR repeat elements"/>
    <property type="evidence" value="ECO:0007669"/>
    <property type="project" value="UniProtKB-UniRule"/>
</dbReference>
<dbReference type="CDD" id="cd09725">
    <property type="entry name" value="Cas2_I_II_III"/>
    <property type="match status" value="1"/>
</dbReference>
<dbReference type="Gene3D" id="3.30.70.240">
    <property type="match status" value="1"/>
</dbReference>
<dbReference type="HAMAP" id="MF_01471">
    <property type="entry name" value="Cas2"/>
    <property type="match status" value="1"/>
</dbReference>
<dbReference type="InterPro" id="IPR021127">
    <property type="entry name" value="CRISPR_associated_Cas2"/>
</dbReference>
<dbReference type="InterPro" id="IPR019199">
    <property type="entry name" value="Virulence_VapD/CRISPR_Cas2"/>
</dbReference>
<dbReference type="NCBIfam" id="TIGR01573">
    <property type="entry name" value="cas2"/>
    <property type="match status" value="1"/>
</dbReference>
<dbReference type="PANTHER" id="PTHR34405">
    <property type="entry name" value="CRISPR-ASSOCIATED ENDORIBONUCLEASE CAS2"/>
    <property type="match status" value="1"/>
</dbReference>
<dbReference type="PANTHER" id="PTHR34405:SF3">
    <property type="entry name" value="CRISPR-ASSOCIATED ENDORIBONUCLEASE CAS2 3"/>
    <property type="match status" value="1"/>
</dbReference>
<dbReference type="Pfam" id="PF09827">
    <property type="entry name" value="CRISPR_Cas2"/>
    <property type="match status" value="1"/>
</dbReference>
<dbReference type="PIRSF" id="PIRSF032582">
    <property type="entry name" value="Cas2"/>
    <property type="match status" value="1"/>
</dbReference>
<dbReference type="SUPFAM" id="SSF143430">
    <property type="entry name" value="TTP0101/SSO1404-like"/>
    <property type="match status" value="1"/>
</dbReference>
<reference key="1">
    <citation type="journal article" date="2011" name="BMC Genomics">
        <title>Complete genome sequence of the filamentous anoxygenic phototrophic bacterium Chloroflexus aurantiacus.</title>
        <authorList>
            <person name="Tang K.H."/>
            <person name="Barry K."/>
            <person name="Chertkov O."/>
            <person name="Dalin E."/>
            <person name="Han C.S."/>
            <person name="Hauser L.J."/>
            <person name="Honchak B.M."/>
            <person name="Karbach L.E."/>
            <person name="Land M.L."/>
            <person name="Lapidus A."/>
            <person name="Larimer F.W."/>
            <person name="Mikhailova N."/>
            <person name="Pitluck S."/>
            <person name="Pierson B.K."/>
            <person name="Blankenship R.E."/>
        </authorList>
    </citation>
    <scope>NUCLEOTIDE SEQUENCE [LARGE SCALE GENOMIC DNA]</scope>
    <source>
        <strain>ATCC 29366 / DSM 635 / J-10-fl</strain>
    </source>
</reference>
<proteinExistence type="inferred from homology"/>
<comment type="function">
    <text evidence="1">CRISPR (clustered regularly interspaced short palindromic repeat), is an adaptive immune system that provides protection against mobile genetic elements (viruses, transposable elements and conjugative plasmids). CRISPR clusters contain sequences complementary to antecedent mobile elements and target invading nucleic acids. CRISPR clusters are transcribed and processed into CRISPR RNA (crRNA). Functions as a ssRNA-specific endoribonuclease. Involved in the integration of spacer DNA into the CRISPR cassette.</text>
</comment>
<comment type="cofactor">
    <cofactor evidence="1">
        <name>Mg(2+)</name>
        <dbReference type="ChEBI" id="CHEBI:18420"/>
    </cofactor>
</comment>
<comment type="subunit">
    <text evidence="1">Homodimer, forms a heterotetramer with a Cas1 homodimer.</text>
</comment>
<comment type="similarity">
    <text evidence="1">Belongs to the CRISPR-associated endoribonuclease Cas2 protein family.</text>
</comment>
<protein>
    <recommendedName>
        <fullName evidence="1">CRISPR-associated endoribonuclease Cas2 3</fullName>
        <ecNumber evidence="1">3.1.-.-</ecNumber>
    </recommendedName>
</protein>
<evidence type="ECO:0000255" key="1">
    <source>
        <dbReference type="HAMAP-Rule" id="MF_01471"/>
    </source>
</evidence>
<sequence>MKMFTVISYDIVDDQRRTSVMKVLKGYGVRVQYSVFEAILDAREFHDLSNQLRKIIDPGQDSIRCYRLDQVAAQRTVIYGIGLTTTDPTHYMV</sequence>